<gene>
    <name evidence="1" type="primary">dnaA</name>
    <name type="ordered locus">E2348C_4013</name>
</gene>
<feature type="chain" id="PRO_1000189796" description="Chromosomal replication initiator protein DnaA">
    <location>
        <begin position="1"/>
        <end position="467"/>
    </location>
</feature>
<feature type="region of interest" description="Domain I, interacts with DnaA modulators" evidence="1">
    <location>
        <begin position="1"/>
        <end position="90"/>
    </location>
</feature>
<feature type="region of interest" description="Domain II" evidence="1">
    <location>
        <begin position="91"/>
        <end position="130"/>
    </location>
</feature>
<feature type="region of interest" description="Disordered" evidence="2">
    <location>
        <begin position="98"/>
        <end position="119"/>
    </location>
</feature>
<feature type="region of interest" description="Domain III, AAA+ region" evidence="1">
    <location>
        <begin position="131"/>
        <end position="347"/>
    </location>
</feature>
<feature type="region of interest" description="Domain IV, binds dsDNA" evidence="1">
    <location>
        <begin position="348"/>
        <end position="467"/>
    </location>
</feature>
<feature type="compositionally biased region" description="Low complexity" evidence="2">
    <location>
        <begin position="98"/>
        <end position="111"/>
    </location>
</feature>
<feature type="binding site" evidence="1">
    <location>
        <position position="175"/>
    </location>
    <ligand>
        <name>ATP</name>
        <dbReference type="ChEBI" id="CHEBI:30616"/>
    </ligand>
</feature>
<feature type="binding site" evidence="1">
    <location>
        <position position="177"/>
    </location>
    <ligand>
        <name>ATP</name>
        <dbReference type="ChEBI" id="CHEBI:30616"/>
    </ligand>
</feature>
<feature type="binding site" evidence="1">
    <location>
        <position position="178"/>
    </location>
    <ligand>
        <name>ATP</name>
        <dbReference type="ChEBI" id="CHEBI:30616"/>
    </ligand>
</feature>
<feature type="binding site" evidence="1">
    <location>
        <position position="179"/>
    </location>
    <ligand>
        <name>ATP</name>
        <dbReference type="ChEBI" id="CHEBI:30616"/>
    </ligand>
</feature>
<organism>
    <name type="scientific">Escherichia coli O127:H6 (strain E2348/69 / EPEC)</name>
    <dbReference type="NCBI Taxonomy" id="574521"/>
    <lineage>
        <taxon>Bacteria</taxon>
        <taxon>Pseudomonadati</taxon>
        <taxon>Pseudomonadota</taxon>
        <taxon>Gammaproteobacteria</taxon>
        <taxon>Enterobacterales</taxon>
        <taxon>Enterobacteriaceae</taxon>
        <taxon>Escherichia</taxon>
    </lineage>
</organism>
<dbReference type="EMBL" id="FM180568">
    <property type="protein sequence ID" value="CAS11561.1"/>
    <property type="molecule type" value="Genomic_DNA"/>
</dbReference>
<dbReference type="RefSeq" id="WP_000059111.1">
    <property type="nucleotide sequence ID" value="NC_011601.1"/>
</dbReference>
<dbReference type="SMR" id="B7UMG9"/>
<dbReference type="GeneID" id="93778443"/>
<dbReference type="KEGG" id="ecg:E2348C_4013"/>
<dbReference type="HOGENOM" id="CLU_026910_0_1_6"/>
<dbReference type="Proteomes" id="UP000008205">
    <property type="component" value="Chromosome"/>
</dbReference>
<dbReference type="GO" id="GO:0005737">
    <property type="term" value="C:cytoplasm"/>
    <property type="evidence" value="ECO:0007669"/>
    <property type="project" value="UniProtKB-SubCell"/>
</dbReference>
<dbReference type="GO" id="GO:0005886">
    <property type="term" value="C:plasma membrane"/>
    <property type="evidence" value="ECO:0007669"/>
    <property type="project" value="TreeGrafter"/>
</dbReference>
<dbReference type="GO" id="GO:0005524">
    <property type="term" value="F:ATP binding"/>
    <property type="evidence" value="ECO:0007669"/>
    <property type="project" value="UniProtKB-UniRule"/>
</dbReference>
<dbReference type="GO" id="GO:0016887">
    <property type="term" value="F:ATP hydrolysis activity"/>
    <property type="evidence" value="ECO:0007669"/>
    <property type="project" value="InterPro"/>
</dbReference>
<dbReference type="GO" id="GO:0003688">
    <property type="term" value="F:DNA replication origin binding"/>
    <property type="evidence" value="ECO:0007669"/>
    <property type="project" value="UniProtKB-UniRule"/>
</dbReference>
<dbReference type="GO" id="GO:0008289">
    <property type="term" value="F:lipid binding"/>
    <property type="evidence" value="ECO:0007669"/>
    <property type="project" value="UniProtKB-KW"/>
</dbReference>
<dbReference type="GO" id="GO:0006270">
    <property type="term" value="P:DNA replication initiation"/>
    <property type="evidence" value="ECO:0007669"/>
    <property type="project" value="UniProtKB-UniRule"/>
</dbReference>
<dbReference type="GO" id="GO:0006275">
    <property type="term" value="P:regulation of DNA replication"/>
    <property type="evidence" value="ECO:0007669"/>
    <property type="project" value="UniProtKB-UniRule"/>
</dbReference>
<dbReference type="CDD" id="cd00009">
    <property type="entry name" value="AAA"/>
    <property type="match status" value="1"/>
</dbReference>
<dbReference type="CDD" id="cd06571">
    <property type="entry name" value="Bac_DnaA_C"/>
    <property type="match status" value="1"/>
</dbReference>
<dbReference type="FunFam" id="1.10.1750.10:FF:000001">
    <property type="entry name" value="Chromosomal replication initiator protein DnaA"/>
    <property type="match status" value="1"/>
</dbReference>
<dbReference type="FunFam" id="1.10.8.60:FF:000003">
    <property type="entry name" value="Chromosomal replication initiator protein DnaA"/>
    <property type="match status" value="1"/>
</dbReference>
<dbReference type="FunFam" id="3.30.300.180:FF:000001">
    <property type="entry name" value="Chromosomal replication initiator protein DnaA"/>
    <property type="match status" value="1"/>
</dbReference>
<dbReference type="FunFam" id="3.40.50.300:FF:000103">
    <property type="entry name" value="Chromosomal replication initiator protein DnaA"/>
    <property type="match status" value="1"/>
</dbReference>
<dbReference type="Gene3D" id="1.10.1750.10">
    <property type="match status" value="1"/>
</dbReference>
<dbReference type="Gene3D" id="1.10.8.60">
    <property type="match status" value="1"/>
</dbReference>
<dbReference type="Gene3D" id="3.30.300.180">
    <property type="match status" value="1"/>
</dbReference>
<dbReference type="Gene3D" id="3.40.50.300">
    <property type="entry name" value="P-loop containing nucleotide triphosphate hydrolases"/>
    <property type="match status" value="1"/>
</dbReference>
<dbReference type="HAMAP" id="MF_00377">
    <property type="entry name" value="DnaA_bact"/>
    <property type="match status" value="1"/>
</dbReference>
<dbReference type="InterPro" id="IPR003593">
    <property type="entry name" value="AAA+_ATPase"/>
</dbReference>
<dbReference type="InterPro" id="IPR001957">
    <property type="entry name" value="Chromosome_initiator_DnaA"/>
</dbReference>
<dbReference type="InterPro" id="IPR020591">
    <property type="entry name" value="Chromosome_initiator_DnaA-like"/>
</dbReference>
<dbReference type="InterPro" id="IPR018312">
    <property type="entry name" value="Chromosome_initiator_DnaA_CS"/>
</dbReference>
<dbReference type="InterPro" id="IPR013159">
    <property type="entry name" value="DnaA_C"/>
</dbReference>
<dbReference type="InterPro" id="IPR013317">
    <property type="entry name" value="DnaA_dom"/>
</dbReference>
<dbReference type="InterPro" id="IPR024633">
    <property type="entry name" value="DnaA_N_dom"/>
</dbReference>
<dbReference type="InterPro" id="IPR038454">
    <property type="entry name" value="DnaA_N_sf"/>
</dbReference>
<dbReference type="InterPro" id="IPR027417">
    <property type="entry name" value="P-loop_NTPase"/>
</dbReference>
<dbReference type="InterPro" id="IPR010921">
    <property type="entry name" value="Trp_repressor/repl_initiator"/>
</dbReference>
<dbReference type="NCBIfam" id="TIGR00362">
    <property type="entry name" value="DnaA"/>
    <property type="match status" value="1"/>
</dbReference>
<dbReference type="PANTHER" id="PTHR30050">
    <property type="entry name" value="CHROMOSOMAL REPLICATION INITIATOR PROTEIN DNAA"/>
    <property type="match status" value="1"/>
</dbReference>
<dbReference type="PANTHER" id="PTHR30050:SF2">
    <property type="entry name" value="CHROMOSOMAL REPLICATION INITIATOR PROTEIN DNAA"/>
    <property type="match status" value="1"/>
</dbReference>
<dbReference type="Pfam" id="PF00308">
    <property type="entry name" value="Bac_DnaA"/>
    <property type="match status" value="1"/>
</dbReference>
<dbReference type="Pfam" id="PF08299">
    <property type="entry name" value="Bac_DnaA_C"/>
    <property type="match status" value="1"/>
</dbReference>
<dbReference type="Pfam" id="PF11638">
    <property type="entry name" value="DnaA_N"/>
    <property type="match status" value="1"/>
</dbReference>
<dbReference type="PRINTS" id="PR00051">
    <property type="entry name" value="DNAA"/>
</dbReference>
<dbReference type="SMART" id="SM00382">
    <property type="entry name" value="AAA"/>
    <property type="match status" value="1"/>
</dbReference>
<dbReference type="SMART" id="SM00760">
    <property type="entry name" value="Bac_DnaA_C"/>
    <property type="match status" value="1"/>
</dbReference>
<dbReference type="SUPFAM" id="SSF52540">
    <property type="entry name" value="P-loop containing nucleoside triphosphate hydrolases"/>
    <property type="match status" value="1"/>
</dbReference>
<dbReference type="SUPFAM" id="SSF48295">
    <property type="entry name" value="TrpR-like"/>
    <property type="match status" value="1"/>
</dbReference>
<dbReference type="PROSITE" id="PS01008">
    <property type="entry name" value="DNAA"/>
    <property type="match status" value="1"/>
</dbReference>
<reference key="1">
    <citation type="journal article" date="2009" name="J. Bacteriol.">
        <title>Complete genome sequence and comparative genome analysis of enteropathogenic Escherichia coli O127:H6 strain E2348/69.</title>
        <authorList>
            <person name="Iguchi A."/>
            <person name="Thomson N.R."/>
            <person name="Ogura Y."/>
            <person name="Saunders D."/>
            <person name="Ooka T."/>
            <person name="Henderson I.R."/>
            <person name="Harris D."/>
            <person name="Asadulghani M."/>
            <person name="Kurokawa K."/>
            <person name="Dean P."/>
            <person name="Kenny B."/>
            <person name="Quail M.A."/>
            <person name="Thurston S."/>
            <person name="Dougan G."/>
            <person name="Hayashi T."/>
            <person name="Parkhill J."/>
            <person name="Frankel G."/>
        </authorList>
    </citation>
    <scope>NUCLEOTIDE SEQUENCE [LARGE SCALE GENOMIC DNA]</scope>
    <source>
        <strain>E2348/69 / EPEC</strain>
    </source>
</reference>
<name>DNAA_ECO27</name>
<proteinExistence type="inferred from homology"/>
<keyword id="KW-0067">ATP-binding</keyword>
<keyword id="KW-0963">Cytoplasm</keyword>
<keyword id="KW-0235">DNA replication</keyword>
<keyword id="KW-0238">DNA-binding</keyword>
<keyword id="KW-0446">Lipid-binding</keyword>
<keyword id="KW-0547">Nucleotide-binding</keyword>
<keyword id="KW-1185">Reference proteome</keyword>
<evidence type="ECO:0000255" key="1">
    <source>
        <dbReference type="HAMAP-Rule" id="MF_00377"/>
    </source>
</evidence>
<evidence type="ECO:0000256" key="2">
    <source>
        <dbReference type="SAM" id="MobiDB-lite"/>
    </source>
</evidence>
<protein>
    <recommendedName>
        <fullName evidence="1">Chromosomal replication initiator protein DnaA</fullName>
    </recommendedName>
</protein>
<comment type="function">
    <text evidence="1">Plays an essential role in the initiation and regulation of chromosomal replication. ATP-DnaA binds to the origin of replication (oriC) to initiate formation of the DNA replication initiation complex once per cell cycle. Binds the DnaA box (a 9 base pair repeat at the origin) and separates the double-stranded (ds)DNA. Forms a right-handed helical filament on oriC DNA; dsDNA binds to the exterior of the filament while single-stranded (ss)DNA is stabiized in the filament's interior. The ATP-DnaA-oriC complex binds and stabilizes one strand of the AT-rich DNA unwinding element (DUE), permitting loading of DNA polymerase. After initiation quickly degrades to an ADP-DnaA complex that is not apt for DNA replication. Binds acidic phospholipids.</text>
</comment>
<comment type="subunit">
    <text evidence="1">Oligomerizes as a right-handed, spiral filament on DNA at oriC.</text>
</comment>
<comment type="subcellular location">
    <subcellularLocation>
        <location evidence="1">Cytoplasm</location>
    </subcellularLocation>
</comment>
<comment type="domain">
    <text evidence="1">Domain I is involved in oligomerization and binding regulators, domain II is flexibile and of varying length in different bacteria, domain III forms the AAA+ region, while domain IV binds dsDNA.</text>
</comment>
<comment type="similarity">
    <text evidence="1">Belongs to the DnaA family.</text>
</comment>
<accession>B7UMG9</accession>
<sequence>MSLSLWQQCLARLQDELPATEFSMWIRPLQAELSDNTLALYAPNRFVLDWVRDKYLNNINGLLTSFCGADAPQLRFEVGTKPVTQTPQAAVTSNVAAPAQVAQTQPQRAAPSTRSGWDNVPAPAEPTYRSNVNVKHTFDNFVEGKSNQLARAAARQVADNPGGAYNPLFLYGGTGLGKTHLLHAVGNGIMARKPNAKVVYMHSERFVQDMVKALQNNAIEEFKRYYRSVDALLIDDIQFFANKERSQEEFFHTFNALLEGNQQIILTSDRYPKEINGVEDRLKSRFGWGLTVAIEPPELETRVAILMKKADENDIRLPGEVAFFIAKRLRSNVRELEGALNRVIANANFTGRAITIDFVREALRDLLALQEKLVTIDNIQKTVAEYYKIKVADLLSKRRSRSVARPRQMAMALAKELTNHSLPEIGDAFGGRDHTTVLHACRKIEQLREESHDIKEDFSNLIRTLSS</sequence>